<proteinExistence type="evidence at protein level"/>
<organismHost>
    <name type="scientific">Aves</name>
    <dbReference type="NCBI Taxonomy" id="8782"/>
</organismHost>
<organismHost>
    <name type="scientific">Homo sapiens</name>
    <name type="common">Human</name>
    <dbReference type="NCBI Taxonomy" id="9606"/>
</organismHost>
<protein>
    <recommendedName>
        <fullName evidence="1">Neuraminidase</fullName>
        <ecNumber evidence="1">3.2.1.18</ecNumber>
    </recommendedName>
</protein>
<gene>
    <name evidence="1" type="primary">NA</name>
</gene>
<dbReference type="EC" id="3.2.1.18" evidence="1"/>
<dbReference type="EMBL" id="AB101671">
    <property type="protein sequence ID" value="BAC77660.1"/>
    <property type="molecule type" value="Genomic_RNA"/>
</dbReference>
<dbReference type="EMBL" id="DQ508843">
    <property type="protein sequence ID" value="ABF21326.1"/>
    <property type="molecule type" value="Genomic_RNA"/>
</dbReference>
<dbReference type="EMBL" id="AY643088">
    <property type="protein sequence ID" value="AAT66419.1"/>
    <property type="molecule type" value="Genomic_RNA"/>
</dbReference>
<dbReference type="EMBL" id="AY643089">
    <property type="protein sequence ID" value="AAT66420.1"/>
    <property type="molecule type" value="Genomic_RNA"/>
</dbReference>
<dbReference type="PDB" id="6Q20">
    <property type="method" value="X-ray"/>
    <property type="resolution" value="2.45 A"/>
    <property type="chains" value="A=82-469"/>
</dbReference>
<dbReference type="PDBsum" id="6Q20"/>
<dbReference type="SMR" id="Q1K9Q1"/>
<dbReference type="CAZy" id="GH34">
    <property type="family name" value="Glycoside Hydrolase Family 34"/>
</dbReference>
<dbReference type="GlyCosmos" id="Q1K9Q1">
    <property type="glycosylation" value="8 sites, No reported glycans"/>
</dbReference>
<dbReference type="ABCD" id="Q1K9Q1">
    <property type="antibodies" value="1 sequenced antibody"/>
</dbReference>
<dbReference type="Proteomes" id="UP000118104">
    <property type="component" value="Genome"/>
</dbReference>
<dbReference type="GO" id="GO:0020002">
    <property type="term" value="C:host cell plasma membrane"/>
    <property type="evidence" value="ECO:0007669"/>
    <property type="project" value="UniProtKB-SubCell"/>
</dbReference>
<dbReference type="GO" id="GO:0016020">
    <property type="term" value="C:membrane"/>
    <property type="evidence" value="ECO:0007669"/>
    <property type="project" value="UniProtKB-UniRule"/>
</dbReference>
<dbReference type="GO" id="GO:0055036">
    <property type="term" value="C:virion membrane"/>
    <property type="evidence" value="ECO:0007669"/>
    <property type="project" value="UniProtKB-SubCell"/>
</dbReference>
<dbReference type="GO" id="GO:0004308">
    <property type="term" value="F:exo-alpha-sialidase activity"/>
    <property type="evidence" value="ECO:0007669"/>
    <property type="project" value="UniProtKB-UniRule"/>
</dbReference>
<dbReference type="GO" id="GO:0046872">
    <property type="term" value="F:metal ion binding"/>
    <property type="evidence" value="ECO:0007669"/>
    <property type="project" value="UniProtKB-UniRule"/>
</dbReference>
<dbReference type="GO" id="GO:0005975">
    <property type="term" value="P:carbohydrate metabolic process"/>
    <property type="evidence" value="ECO:0007669"/>
    <property type="project" value="InterPro"/>
</dbReference>
<dbReference type="GO" id="GO:0046761">
    <property type="term" value="P:viral budding from plasma membrane"/>
    <property type="evidence" value="ECO:0007669"/>
    <property type="project" value="UniProtKB-UniRule"/>
</dbReference>
<dbReference type="CDD" id="cd15483">
    <property type="entry name" value="Influenza_NA"/>
    <property type="match status" value="1"/>
</dbReference>
<dbReference type="Gene3D" id="2.120.10.10">
    <property type="match status" value="1"/>
</dbReference>
<dbReference type="HAMAP" id="MF_04071">
    <property type="entry name" value="INFV_NRAM"/>
    <property type="match status" value="1"/>
</dbReference>
<dbReference type="InterPro" id="IPR001860">
    <property type="entry name" value="Glyco_hydro_34"/>
</dbReference>
<dbReference type="InterPro" id="IPR033654">
    <property type="entry name" value="Sialidase_Influenza_A/B"/>
</dbReference>
<dbReference type="InterPro" id="IPR036278">
    <property type="entry name" value="Sialidase_sf"/>
</dbReference>
<dbReference type="Pfam" id="PF00064">
    <property type="entry name" value="Neur"/>
    <property type="match status" value="1"/>
</dbReference>
<dbReference type="SUPFAM" id="SSF50939">
    <property type="entry name" value="Sialidases"/>
    <property type="match status" value="1"/>
</dbReference>
<name>NRAM_I57A0</name>
<comment type="function">
    <text evidence="1">Catalyzes the removal of terminal sialic acid residues from viral and cellular glycoconjugates. Cleaves off the terminal sialic acids on the glycosylated HA during virus budding to facilitate virus release. Additionally helps virus spread through the circulation by further removing sialic acids from the cell surface. These cleavages prevent self-aggregation and ensure the efficient spread of the progeny virus from cell to cell. Otherwise, infection would be limited to one round of replication. Described as a receptor-destroying enzyme because it cleaves a terminal sialic acid from the cellular receptors. May facilitate viral invasion of the upper airways by cleaving the sialic acid moieties on the mucin of the airway epithelial cells. Likely to plays a role in the budding process through its association with lipid rafts during intracellular transport. May additionally display a raft-association independent effect on budding. Plays a role in the determination of host range restriction on replication and virulence. Sialidase activity in late endosome/lysosome traffic seems to enhance virus replication.</text>
</comment>
<comment type="catalytic activity">
    <reaction evidence="1">
        <text>Hydrolysis of alpha-(2-&gt;3)-, alpha-(2-&gt;6)-, alpha-(2-&gt;8)- glycosidic linkages of terminal sialic acid residues in oligosaccharides, glycoproteins, glycolipids, colominic acid and synthetic substrates.</text>
        <dbReference type="EC" id="3.2.1.18"/>
    </reaction>
</comment>
<comment type="cofactor">
    <cofactor evidence="1">
        <name>Ca(2+)</name>
        <dbReference type="ChEBI" id="CHEBI:29108"/>
    </cofactor>
</comment>
<comment type="activity regulation">
    <text evidence="1">Inhibited by the neuraminidase inhibitors zanamivir (Relenza) and oseltamivir (Tamiflu). These drugs interfere with the release of progeny virus from infected cells and are effective against all influenza strains. Resistance to neuraminidase inhibitors is quite rare.</text>
</comment>
<comment type="subunit">
    <text evidence="1">Homotetramer.</text>
</comment>
<comment type="subcellular location">
    <subcellularLocation>
        <location evidence="1">Virion membrane</location>
    </subcellularLocation>
    <subcellularLocation>
        <location evidence="1">Host apical cell membrane</location>
        <topology evidence="1">Single-pass type II membrane protein</topology>
    </subcellularLocation>
    <text evidence="1">Preferentially accumulates at the apical plasma membrane in infected polarized epithelial cells, which is the virus assembly site. Uses lipid rafts for cell surface transport and apical sorting. In the virion, forms a mushroom-shaped spike on the surface of the membrane.</text>
</comment>
<comment type="domain">
    <text evidence="1">Intact N-terminus is essential for virion morphogenesis. Possesses two apical sorting signals, one in the ectodomain, which is likely to be a glycan, and the other in the transmembrane domain. The transmembrane domain also plays a role in lipid raft association.</text>
</comment>
<comment type="PTM">
    <text evidence="1">N-glycosylated.</text>
</comment>
<comment type="miscellaneous">
    <text>The influenza A genome consist of 8 RNA segments. Genetic variation of hemagglutinin and/or neuraminidase genes results in the emergence of new influenza strains. The mechanism of variation can be the result of point mutations or the result of genetic reassortment between segments of two different strains.</text>
</comment>
<comment type="similarity">
    <text evidence="1">Belongs to the glycosyl hydrolase 34 family.</text>
</comment>
<accession>Q1K9Q1</accession>
<accession>Q6DUK6</accession>
<accession>Q6DUK7</accession>
<accession>Q7T4W2</accession>
<evidence type="ECO:0000255" key="1">
    <source>
        <dbReference type="HAMAP-Rule" id="MF_04071"/>
    </source>
</evidence>
<evidence type="ECO:0000256" key="2">
    <source>
        <dbReference type="SAM" id="MobiDB-lite"/>
    </source>
</evidence>
<evidence type="ECO:0007829" key="3">
    <source>
        <dbReference type="PDB" id="6Q20"/>
    </source>
</evidence>
<keyword id="KW-0002">3D-structure</keyword>
<keyword id="KW-0106">Calcium</keyword>
<keyword id="KW-1015">Disulfide bond</keyword>
<keyword id="KW-0325">Glycoprotein</keyword>
<keyword id="KW-0326">Glycosidase</keyword>
<keyword id="KW-1032">Host cell membrane</keyword>
<keyword id="KW-1043">Host membrane</keyword>
<keyword id="KW-0378">Hydrolase</keyword>
<keyword id="KW-0472">Membrane</keyword>
<keyword id="KW-0479">Metal-binding</keyword>
<keyword id="KW-0735">Signal-anchor</keyword>
<keyword id="KW-0812">Transmembrane</keyword>
<keyword id="KW-1133">Transmembrane helix</keyword>
<keyword id="KW-0946">Virion</keyword>
<reference key="1">
    <citation type="journal article" date="2003" name="FEBS Lett.">
        <title>A molecular mechanism for the low-pH stability of sialidase activity of influenza A virus N2 neuraminidases.</title>
        <authorList>
            <person name="Takahashi T."/>
            <person name="Suzuki T."/>
            <person name="Hidari K.I.-P.J."/>
            <person name="Miyamoto D."/>
            <person name="Suzuki Y."/>
        </authorList>
    </citation>
    <scope>NUCLEOTIDE SEQUENCE [GENOMIC RNA]</scope>
</reference>
<reference key="2">
    <citation type="submission" date="2006-04" db="EMBL/GenBank/DDBJ databases">
        <title>Complete genome sequencing and analysis of selected influenza virus vaccine strains spanning six decades (1933-1999).</title>
        <authorList>
            <person name="Mbawuike I.N."/>
            <person name="Zhang Y."/>
            <person name="Yamada R.E."/>
            <person name="Nino D."/>
            <person name="Bui H.-H."/>
            <person name="Sette A."/>
            <person name="Couch R.B."/>
        </authorList>
    </citation>
    <scope>NUCLEOTIDE SEQUENCE [GENOMIC RNA]</scope>
</reference>
<reference key="3">
    <citation type="journal article" date="2006" name="J. Infect. Dis.">
        <title>Comparative activities of oseltamivir and A-322278 in immunocompetent and immunocompromised murine models of influenza virus infection.</title>
        <authorList>
            <person name="Ison M.G."/>
            <person name="Mishin V.P."/>
            <person name="Braciale T.J."/>
            <person name="Hayden F.G."/>
            <person name="Gubareva L.V."/>
        </authorList>
    </citation>
    <scope>NUCLEOTIDE SEQUENCE [GENOMIC RNA] OF 7-469</scope>
    <source>
        <strain>Isolate Oseltamivir resistant BO12.1-c1</strain>
        <strain>Isolate Wildtype</strain>
    </source>
</reference>
<reference key="4">
    <citation type="journal article" date="2004" name="Virus Res.">
        <title>Assembly and budding of influenza virus.</title>
        <authorList>
            <person name="Nayak D.P."/>
            <person name="Hui E.K."/>
            <person name="Barman S."/>
        </authorList>
    </citation>
    <scope>REVIEW</scope>
</reference>
<reference key="5">
    <citation type="journal article" date="2005" name="N. Engl. J. Med.">
        <title>Neuraminidase inhibitors for influenza.</title>
        <authorList>
            <person name="Moscona A."/>
        </authorList>
    </citation>
    <scope>REVIEW</scope>
</reference>
<reference key="6">
    <citation type="journal article" date="2005" name="Biol. Pharm. Bull.">
        <title>Sialobiology of influenza: molecular mechanism of host range variation of influenza viruses.</title>
        <authorList>
            <person name="Suzuki Y."/>
        </authorList>
    </citation>
    <scope>REVIEW</scope>
</reference>
<feature type="chain" id="PRO_0000280139" description="Neuraminidase">
    <location>
        <begin position="1"/>
        <end position="469"/>
    </location>
</feature>
<feature type="topological domain" description="Intravirion" evidence="1">
    <location>
        <begin position="1"/>
        <end position="6"/>
    </location>
</feature>
<feature type="transmembrane region" description="Helical" evidence="1">
    <location>
        <begin position="7"/>
        <end position="29"/>
    </location>
</feature>
<feature type="topological domain" description="Virion surface" evidence="1">
    <location>
        <begin position="30"/>
        <end position="469"/>
    </location>
</feature>
<feature type="region of interest" description="Involved in apical transport and lipid raft association" evidence="1">
    <location>
        <begin position="11"/>
        <end position="33"/>
    </location>
</feature>
<feature type="region of interest" description="Hypervariable stalk region" evidence="1">
    <location>
        <begin position="36"/>
        <end position="88"/>
    </location>
</feature>
<feature type="region of interest" description="Head of neuraminidase" evidence="1">
    <location>
        <begin position="91"/>
        <end position="469"/>
    </location>
</feature>
<feature type="region of interest" description="Disordered" evidence="2">
    <location>
        <begin position="325"/>
        <end position="349"/>
    </location>
</feature>
<feature type="active site" description="Proton donor/acceptor" evidence="1">
    <location>
        <position position="151"/>
    </location>
</feature>
<feature type="active site" description="Nucleophile" evidence="1">
    <location>
        <position position="406"/>
    </location>
</feature>
<feature type="binding site" evidence="1">
    <location>
        <position position="118"/>
    </location>
    <ligand>
        <name>substrate</name>
    </ligand>
</feature>
<feature type="binding site" evidence="1">
    <location>
        <position position="152"/>
    </location>
    <ligand>
        <name>substrate</name>
    </ligand>
</feature>
<feature type="binding site" evidence="1">
    <location>
        <begin position="276"/>
        <end position="277"/>
    </location>
    <ligand>
        <name>substrate</name>
    </ligand>
</feature>
<feature type="binding site" evidence="1">
    <location>
        <position position="292"/>
    </location>
    <ligand>
        <name>substrate</name>
    </ligand>
</feature>
<feature type="binding site" evidence="1">
    <location>
        <position position="293"/>
    </location>
    <ligand>
        <name>Ca(2+)</name>
        <dbReference type="ChEBI" id="CHEBI:29108"/>
    </ligand>
</feature>
<feature type="binding site" evidence="1">
    <location>
        <position position="297"/>
    </location>
    <ligand>
        <name>Ca(2+)</name>
        <dbReference type="ChEBI" id="CHEBI:29108"/>
    </ligand>
</feature>
<feature type="binding site" evidence="1">
    <location>
        <position position="324"/>
    </location>
    <ligand>
        <name>Ca(2+)</name>
        <dbReference type="ChEBI" id="CHEBI:29108"/>
    </ligand>
</feature>
<feature type="binding site" evidence="1">
    <location>
        <position position="371"/>
    </location>
    <ligand>
        <name>substrate</name>
    </ligand>
</feature>
<feature type="glycosylation site" description="N-linked (GlcNAc...) asparagine; by host" evidence="1">
    <location>
        <position position="61"/>
    </location>
</feature>
<feature type="glycosylation site" description="N-linked (GlcNAc...) asparagine; by host" evidence="1">
    <location>
        <position position="69"/>
    </location>
</feature>
<feature type="glycosylation site" description="N-linked (GlcNAc...) asparagine; by host" evidence="1">
    <location>
        <position position="70"/>
    </location>
</feature>
<feature type="glycosylation site" description="N-linked (GlcNAc...) asparagine; by host" evidence="1">
    <location>
        <position position="86"/>
    </location>
</feature>
<feature type="glycosylation site" description="N-linked (GlcNAc...) asparagine; by host" evidence="1">
    <location>
        <position position="146"/>
    </location>
</feature>
<feature type="glycosylation site" description="N-linked (GlcNAc...) asparagine; by host" evidence="1">
    <location>
        <position position="200"/>
    </location>
</feature>
<feature type="glycosylation site" description="N-linked (GlcNAc...) asparagine; by host" evidence="1">
    <location>
        <position position="234"/>
    </location>
</feature>
<feature type="glycosylation site" description="N-linked (GlcNAc...) asparagine; by host" evidence="1">
    <location>
        <position position="402"/>
    </location>
</feature>
<feature type="disulfide bond" evidence="1">
    <location>
        <begin position="92"/>
        <end position="417"/>
    </location>
</feature>
<feature type="disulfide bond" evidence="1">
    <location>
        <begin position="124"/>
        <end position="129"/>
    </location>
</feature>
<feature type="disulfide bond" evidence="1">
    <location>
        <begin position="183"/>
        <end position="230"/>
    </location>
</feature>
<feature type="disulfide bond" evidence="1">
    <location>
        <begin position="232"/>
        <end position="237"/>
    </location>
</feature>
<feature type="disulfide bond" evidence="1">
    <location>
        <begin position="278"/>
        <end position="291"/>
    </location>
</feature>
<feature type="disulfide bond" evidence="1">
    <location>
        <begin position="280"/>
        <end position="289"/>
    </location>
</feature>
<feature type="disulfide bond" evidence="1">
    <location>
        <begin position="318"/>
        <end position="337"/>
    </location>
</feature>
<feature type="disulfide bond" evidence="1">
    <location>
        <begin position="421"/>
        <end position="447"/>
    </location>
</feature>
<feature type="sequence variant" description="In strain: Isolate Oseltamivir resistant BO12.1-c1.">
    <original>R</original>
    <variation>K</variation>
    <location>
        <position position="292"/>
    </location>
</feature>
<feature type="sequence variant">
    <original>I</original>
    <variation>T</variation>
    <location>
        <position position="464"/>
    </location>
</feature>
<feature type="sequence conflict" description="In Ref. 1; BAC77660." ref="1">
    <original>K</original>
    <variation>E</variation>
    <location>
        <position position="41"/>
    </location>
</feature>
<feature type="sequence conflict" description="In Ref. 1; BAC77660." ref="1">
    <original>S</original>
    <variation>P</variation>
    <location>
        <position position="105"/>
    </location>
</feature>
<feature type="sequence conflict" description="In Ref. 1; BAC77660." ref="1">
    <original>A</original>
    <variation>G</variation>
    <location>
        <position position="110"/>
    </location>
</feature>
<feature type="strand" evidence="3">
    <location>
        <begin position="95"/>
        <end position="102"/>
    </location>
</feature>
<feature type="helix" evidence="3">
    <location>
        <begin position="105"/>
        <end position="109"/>
    </location>
</feature>
<feature type="strand" evidence="3">
    <location>
        <begin position="115"/>
        <end position="124"/>
    </location>
</feature>
<feature type="strand" evidence="3">
    <location>
        <begin position="129"/>
        <end position="142"/>
    </location>
</feature>
<feature type="helix" evidence="3">
    <location>
        <begin position="143"/>
        <end position="145"/>
    </location>
</feature>
<feature type="turn" evidence="3">
    <location>
        <begin position="146"/>
        <end position="149"/>
    </location>
</feature>
<feature type="strand" evidence="3">
    <location>
        <begin position="157"/>
        <end position="162"/>
    </location>
</feature>
<feature type="strand" evidence="3">
    <location>
        <begin position="172"/>
        <end position="176"/>
    </location>
</feature>
<feature type="strand" evidence="3">
    <location>
        <begin position="178"/>
        <end position="184"/>
    </location>
</feature>
<feature type="strand" evidence="3">
    <location>
        <begin position="186"/>
        <end position="196"/>
    </location>
</feature>
<feature type="strand" evidence="3">
    <location>
        <begin position="202"/>
        <end position="207"/>
    </location>
</feature>
<feature type="strand" evidence="3">
    <location>
        <begin position="210"/>
        <end position="216"/>
    </location>
</feature>
<feature type="strand" evidence="3">
    <location>
        <begin position="218"/>
        <end position="221"/>
    </location>
</feature>
<feature type="strand" evidence="3">
    <location>
        <begin position="231"/>
        <end position="233"/>
    </location>
</feature>
<feature type="strand" evidence="3">
    <location>
        <begin position="236"/>
        <end position="244"/>
    </location>
</feature>
<feature type="strand" evidence="3">
    <location>
        <begin position="246"/>
        <end position="248"/>
    </location>
</feature>
<feature type="strand" evidence="3">
    <location>
        <begin position="250"/>
        <end position="258"/>
    </location>
</feature>
<feature type="strand" evidence="3">
    <location>
        <begin position="261"/>
        <end position="267"/>
    </location>
</feature>
<feature type="strand" evidence="3">
    <location>
        <begin position="276"/>
        <end position="283"/>
    </location>
</feature>
<feature type="strand" evidence="3">
    <location>
        <begin position="286"/>
        <end position="292"/>
    </location>
</feature>
<feature type="strand" evidence="3">
    <location>
        <begin position="301"/>
        <end position="305"/>
    </location>
</feature>
<feature type="turn" evidence="3">
    <location>
        <begin position="307"/>
        <end position="309"/>
    </location>
</feature>
<feature type="strand" evidence="3">
    <location>
        <begin position="312"/>
        <end position="316"/>
    </location>
</feature>
<feature type="strand" evidence="3">
    <location>
        <begin position="324"/>
        <end position="326"/>
    </location>
</feature>
<feature type="strand" evidence="3">
    <location>
        <begin position="337"/>
        <end position="339"/>
    </location>
</feature>
<feature type="strand" evidence="3">
    <location>
        <begin position="353"/>
        <end position="356"/>
    </location>
</feature>
<feature type="strand" evidence="3">
    <location>
        <begin position="359"/>
        <end position="364"/>
    </location>
</feature>
<feature type="strand" evidence="3">
    <location>
        <begin position="366"/>
        <end position="380"/>
    </location>
</feature>
<feature type="turn" evidence="3">
    <location>
        <begin position="381"/>
        <end position="384"/>
    </location>
</feature>
<feature type="strand" evidence="3">
    <location>
        <begin position="390"/>
        <end position="403"/>
    </location>
</feature>
<feature type="strand" evidence="3">
    <location>
        <begin position="407"/>
        <end position="413"/>
    </location>
</feature>
<feature type="strand" evidence="3">
    <location>
        <begin position="415"/>
        <end position="429"/>
    </location>
</feature>
<feature type="turn" evidence="3">
    <location>
        <begin position="430"/>
        <end position="432"/>
    </location>
</feature>
<feature type="strand" evidence="3">
    <location>
        <begin position="439"/>
        <end position="451"/>
    </location>
</feature>
<feature type="helix" evidence="3">
    <location>
        <begin position="464"/>
        <end position="466"/>
    </location>
</feature>
<sequence>MNPNQKIITIGSVSLTIATVCFLMQIAILATTVTLHFKQHKCDSPASNQVMPCEPIIIERNITEIVYLNNTTIEKEICPEVVEYRNWSKPQCQITGFAPFSKDNSIRLSAGGDIWVTREPYVSCDPGKCYQFALGQGTTLDNKHSNGTIHDRIPHRTLLMNELGVPFHLGTKQVCVAWSSSSCHDGKAWLHVCVTGDDRNATASFIYDGRLVDSIGSWSQNILRTQESECVCINGTCTVVMTDGSASGRADTRILFIKEGKIVHIGPLSGSAQHIEECSCYPRYPDVRCICRDNWKGSNRPVIDINMEDYSIDSSYVCSGLVGDTPRNDDSSSNSNCRDPNNERGNPGVKGWAFDNGDDVWMGRTISKDLRSGYETFKVIGGWSTPNSKSQVNRQVIVDNNNWSGYSGIFSVEGKSCINRCFYVELIRGRPQETRVWWTSNSIVVFCGTSGTYGTGSWPDGANINFMPI</sequence>
<organism>
    <name type="scientific">Influenza A virus (strain A/Japan/305/1957 H2N2)</name>
    <dbReference type="NCBI Taxonomy" id="387161"/>
    <lineage>
        <taxon>Viruses</taxon>
        <taxon>Riboviria</taxon>
        <taxon>Orthornavirae</taxon>
        <taxon>Negarnaviricota</taxon>
        <taxon>Polyploviricotina</taxon>
        <taxon>Insthoviricetes</taxon>
        <taxon>Articulavirales</taxon>
        <taxon>Orthomyxoviridae</taxon>
        <taxon>Alphainfluenzavirus</taxon>
        <taxon>Alphainfluenzavirus influenzae</taxon>
        <taxon>Influenza A virus</taxon>
    </lineage>
</organism>